<protein>
    <recommendedName>
        <fullName>Pesticidal crystal protein Cry10Aa</fullName>
    </recommendedName>
    <alternativeName>
        <fullName>78 kDa crystal protein</fullName>
    </alternativeName>
    <alternativeName>
        <fullName>Crystaline entomocidal protoxin</fullName>
    </alternativeName>
    <alternativeName>
        <fullName>Insecticidal delta-endotoxin CryXA(a)</fullName>
    </alternativeName>
</protein>
<sequence length="675" mass="77761">MNPYQNKNEYEIFNAPSNGFSKSNNYSRYPLANKPNQPLKNTNYKDWLNVCQDNQQYGNNAGNFASSETIVGVSAGIIVVGTMLGAFAAPVLAAGIISFGTLLPIFWQGSDPANVWQDLLNIGGRPIQEIDKNIINVLTSIVTPIKNQLDKYQEFFDKWEPARTHANAKAVHDLFTTLEPIIDKDLDMLKNNASYRIPTLPAYAQIATWHLNLLKHAATYYNIWLQNQGINPSTFNSSNYYQGYLKRKIQEYTDYCIQTYNAGLTMIRTNTNATWNMYNTYRLEMTLTVLDLIAIFPNYDPEKYPIGVKSELIREVYTNVNSDTFRTITELENGLTRNPTLFTWINQGRFYTRNSRDILDPYDIFSFTGNQMAFTHTNDDRNIIWGAVHGNIISQDTSKVFPFYRNKPIDKVEIVRHREYSDIIYEMIFFSNSSEVFRYSSNSTIENNYKRTDSYMIPKQTWKNEEYGHTLSYIKTDNYIFSVVRERRRVAFSWTHTSVDFQNTIDLDNITQIHALKALKVSSDSKIVKGPGHTGGDLVILKDSMDFRVRFLKNVSRQYQVRIRYATNAPKTTVFLTGIDTISVELPSTTSRQNPNATDLTYADFGYVTFPRTVPNKTFEGEDTLLMTLYGTPNHSYNIYIDKIEFIPITQSVLDYTEKQNIEKTQKIVNDLFVN</sequence>
<comment type="function">
    <text>Promotes colloidosmotic lysis by binding to the midgut epithelial cells of mosquitos. Active on Aedes aegypti.</text>
</comment>
<comment type="developmental stage">
    <text>The crystal protein is produced during sporulation and is accumulated both as an inclusion and as part of the spore coat.</text>
</comment>
<comment type="miscellaneous">
    <text>Toxic segment of the protein is located in the N-terminus.</text>
</comment>
<comment type="similarity">
    <text evidence="1">Belongs to the delta endotoxin family.</text>
</comment>
<feature type="chain" id="PRO_0000174081" description="Pesticidal crystal protein Cry10Aa">
    <location>
        <begin position="1"/>
        <end position="675"/>
    </location>
</feature>
<feature type="helix" evidence="2">
    <location>
        <begin position="135"/>
        <end position="152"/>
    </location>
</feature>
<name>C10AA_BACTI</name>
<accession>P09662</accession>
<reference key="1">
    <citation type="journal article" date="1986" name="J. Bacteriol.">
        <title>Structural similarity between the lepidoptera- and diptera-specific insecticidal endotoxin genes of Bacillus thuringiensis subsp. 'kurstaki' and 'israelensis'.</title>
        <authorList>
            <person name="Thorne L."/>
            <person name="Garduno F."/>
            <person name="Thompson T."/>
            <person name="Decker D."/>
            <person name="Zounes M."/>
            <person name="Wild M."/>
            <person name="Walfield A.M."/>
            <person name="Pollock T.J."/>
        </authorList>
    </citation>
    <scope>NUCLEOTIDE SEQUENCE [GENOMIC DNA]</scope>
    <source>
        <strain>ONR60A</strain>
    </source>
</reference>
<evidence type="ECO:0000305" key="1"/>
<evidence type="ECO:0007829" key="2">
    <source>
        <dbReference type="PDB" id="8T3H"/>
    </source>
</evidence>
<dbReference type="EMBL" id="M12662">
    <property type="protein sequence ID" value="AAA22614.1"/>
    <property type="molecule type" value="Genomic_DNA"/>
</dbReference>
<dbReference type="PIR" id="B29838">
    <property type="entry name" value="B29838"/>
</dbReference>
<dbReference type="PDB" id="8T3H">
    <property type="method" value="NMR"/>
    <property type="chains" value="A=134-153"/>
</dbReference>
<dbReference type="PDB" id="8T3N">
    <property type="method" value="NMR"/>
    <property type="chains" value="A=134-153"/>
</dbReference>
<dbReference type="PDBsum" id="8T3H"/>
<dbReference type="PDBsum" id="8T3N"/>
<dbReference type="SMR" id="P09662"/>
<dbReference type="GO" id="GO:0005102">
    <property type="term" value="F:signaling receptor binding"/>
    <property type="evidence" value="ECO:0007669"/>
    <property type="project" value="InterPro"/>
</dbReference>
<dbReference type="GO" id="GO:0090729">
    <property type="term" value="F:toxin activity"/>
    <property type="evidence" value="ECO:0007669"/>
    <property type="project" value="UniProtKB-KW"/>
</dbReference>
<dbReference type="GO" id="GO:0030435">
    <property type="term" value="P:sporulation resulting in formation of a cellular spore"/>
    <property type="evidence" value="ECO:0007669"/>
    <property type="project" value="UniProtKB-KW"/>
</dbReference>
<dbReference type="GO" id="GO:0001907">
    <property type="term" value="P:symbiont-mediated killing of host cell"/>
    <property type="evidence" value="ECO:0007669"/>
    <property type="project" value="InterPro"/>
</dbReference>
<dbReference type="CDD" id="cd04085">
    <property type="entry name" value="delta_endotoxin_C"/>
    <property type="match status" value="1"/>
</dbReference>
<dbReference type="Gene3D" id="2.60.120.260">
    <property type="entry name" value="Galactose-binding domain-like"/>
    <property type="match status" value="1"/>
</dbReference>
<dbReference type="Gene3D" id="2.100.10.10">
    <property type="entry name" value="Pesticidal crystal protein, central domain"/>
    <property type="match status" value="1"/>
</dbReference>
<dbReference type="Gene3D" id="1.20.190.10">
    <property type="entry name" value="Pesticidal crystal protein, N-terminal domain"/>
    <property type="match status" value="1"/>
</dbReference>
<dbReference type="InterPro" id="IPR008979">
    <property type="entry name" value="Galactose-bd-like_sf"/>
</dbReference>
<dbReference type="InterPro" id="IPR005638">
    <property type="entry name" value="Pest_crys_dom-III"/>
</dbReference>
<dbReference type="InterPro" id="IPR005639">
    <property type="entry name" value="Pest_crys_dom_I"/>
</dbReference>
<dbReference type="InterPro" id="IPR036716">
    <property type="entry name" value="Pest_crys_N_sf"/>
</dbReference>
<dbReference type="InterPro" id="IPR036399">
    <property type="entry name" value="Pest_cryst_cen_dom_sf"/>
</dbReference>
<dbReference type="InterPro" id="IPR001178">
    <property type="entry name" value="Pest_cryst_dom_II"/>
</dbReference>
<dbReference type="Pfam" id="PF03944">
    <property type="entry name" value="Endotoxin_C"/>
    <property type="match status" value="1"/>
</dbReference>
<dbReference type="Pfam" id="PF00555">
    <property type="entry name" value="Endotoxin_M"/>
    <property type="match status" value="1"/>
</dbReference>
<dbReference type="Pfam" id="PF03945">
    <property type="entry name" value="Endotoxin_N"/>
    <property type="match status" value="1"/>
</dbReference>
<dbReference type="SUPFAM" id="SSF51096">
    <property type="entry name" value="delta-Endotoxin (insectocide), middle domain"/>
    <property type="match status" value="1"/>
</dbReference>
<dbReference type="SUPFAM" id="SSF56849">
    <property type="entry name" value="delta-Endotoxin (insectocide), N-terminal domain"/>
    <property type="match status" value="1"/>
</dbReference>
<dbReference type="SUPFAM" id="SSF49785">
    <property type="entry name" value="Galactose-binding domain-like"/>
    <property type="match status" value="1"/>
</dbReference>
<gene>
    <name type="primary">cry10Aa</name>
    <name type="synonym">cryIVc</name>
    <name type="synonym">cryXA(a)</name>
</gene>
<proteinExistence type="evidence at protein level"/>
<keyword id="KW-0002">3D-structure</keyword>
<keyword id="KW-0749">Sporulation</keyword>
<keyword id="KW-0800">Toxin</keyword>
<keyword id="KW-0843">Virulence</keyword>
<organism>
    <name type="scientific">Bacillus thuringiensis subsp. israelensis</name>
    <dbReference type="NCBI Taxonomy" id="1430"/>
    <lineage>
        <taxon>Bacteria</taxon>
        <taxon>Bacillati</taxon>
        <taxon>Bacillota</taxon>
        <taxon>Bacilli</taxon>
        <taxon>Bacillales</taxon>
        <taxon>Bacillaceae</taxon>
        <taxon>Bacillus</taxon>
        <taxon>Bacillus cereus group</taxon>
    </lineage>
</organism>